<accession>Q8NDC4</accession>
<accession>Q86Y54</accession>
<gene>
    <name type="primary">MORN4</name>
    <name type="synonym">C10orf83</name>
</gene>
<feature type="chain" id="PRO_0000279488" description="MORN repeat-containing protein 4">
    <location>
        <begin position="1"/>
        <end position="146"/>
    </location>
</feature>
<feature type="repeat" description="MORN 1">
    <location>
        <begin position="16"/>
        <end position="38"/>
    </location>
</feature>
<feature type="repeat" description="MORN 2">
    <location>
        <begin position="39"/>
        <end position="61"/>
    </location>
</feature>
<feature type="repeat" description="MORN 3">
    <location>
        <begin position="62"/>
        <end position="84"/>
    </location>
</feature>
<feature type="repeat" description="MORN 4">
    <location>
        <begin position="85"/>
        <end position="107"/>
    </location>
</feature>
<feature type="splice variant" id="VSP_023457" description="In isoform 2." evidence="4">
    <original>MTLTKGSFTYSSGEEYRGEWKE</original>
    <variation>MAWSRAGPMRSGVAPGCLGNSQWAAGIVPSAVAQDGGVKWGNRWWRWRRARWQPGAHQRKSPRRWNPASRRDGHPERPAP</variation>
    <location>
        <begin position="1"/>
        <end position="22"/>
    </location>
</feature>
<dbReference type="EMBL" id="AJ431726">
    <property type="protein sequence ID" value="CAD24475.1"/>
    <property type="molecule type" value="mRNA"/>
</dbReference>
<dbReference type="EMBL" id="AJ312050">
    <property type="protein sequence ID" value="CAC85055.1"/>
    <property type="molecule type" value="mRNA"/>
</dbReference>
<dbReference type="EMBL" id="AL834132">
    <property type="protein sequence ID" value="CAD38849.1"/>
    <property type="molecule type" value="mRNA"/>
</dbReference>
<dbReference type="EMBL" id="AL355315">
    <property type="status" value="NOT_ANNOTATED_CDS"/>
    <property type="molecule type" value="Genomic_DNA"/>
</dbReference>
<dbReference type="EMBL" id="BC093023">
    <property type="protein sequence ID" value="AAH93023.1"/>
    <property type="molecule type" value="mRNA"/>
</dbReference>
<dbReference type="EMBL" id="BC010230">
    <property type="protein sequence ID" value="AAH10230.1"/>
    <property type="molecule type" value="mRNA"/>
</dbReference>
<dbReference type="EMBL" id="BC040015">
    <property type="protein sequence ID" value="AAH40015.1"/>
    <property type="molecule type" value="mRNA"/>
</dbReference>
<dbReference type="CCDS" id="CCDS7468.1">
    <molecule id="Q8NDC4-1"/>
</dbReference>
<dbReference type="RefSeq" id="NP_001092301.1">
    <molecule id="Q8NDC4-1"/>
    <property type="nucleotide sequence ID" value="NM_001098831.2"/>
</dbReference>
<dbReference type="RefSeq" id="NP_849154.1">
    <molecule id="Q8NDC4-1"/>
    <property type="nucleotide sequence ID" value="NM_178832.4"/>
</dbReference>
<dbReference type="RefSeq" id="XP_011537552.1">
    <property type="nucleotide sequence ID" value="XM_011539250.2"/>
</dbReference>
<dbReference type="RefSeq" id="XP_011537553.1">
    <molecule id="Q8NDC4-1"/>
    <property type="nucleotide sequence ID" value="XM_011539251.4"/>
</dbReference>
<dbReference type="RefSeq" id="XP_054220697.1">
    <molecule id="Q8NDC4-1"/>
    <property type="nucleotide sequence ID" value="XM_054364722.1"/>
</dbReference>
<dbReference type="SMR" id="Q8NDC4"/>
<dbReference type="BioGRID" id="125622">
    <property type="interactions" value="35"/>
</dbReference>
<dbReference type="FunCoup" id="Q8NDC4">
    <property type="interactions" value="147"/>
</dbReference>
<dbReference type="IntAct" id="Q8NDC4">
    <property type="interactions" value="32"/>
</dbReference>
<dbReference type="MINT" id="Q8NDC4"/>
<dbReference type="STRING" id="9606.ENSP00000307636"/>
<dbReference type="BioMuta" id="MORN4"/>
<dbReference type="DMDM" id="74751218"/>
<dbReference type="MassIVE" id="Q8NDC4"/>
<dbReference type="PaxDb" id="9606-ENSP00000307636"/>
<dbReference type="PeptideAtlas" id="Q8NDC4"/>
<dbReference type="ProteomicsDB" id="73013">
    <molecule id="Q8NDC4-1"/>
</dbReference>
<dbReference type="ProteomicsDB" id="73014">
    <molecule id="Q8NDC4-2"/>
</dbReference>
<dbReference type="Antibodypedia" id="30988">
    <property type="antibodies" value="39 antibodies from 15 providers"/>
</dbReference>
<dbReference type="DNASU" id="118812"/>
<dbReference type="Ensembl" id="ENST00000307450.11">
    <molecule id="Q8NDC4-1"/>
    <property type="protein sequence ID" value="ENSP00000307636.6"/>
    <property type="gene ID" value="ENSG00000171160.18"/>
</dbReference>
<dbReference type="GeneID" id="118812"/>
<dbReference type="KEGG" id="hsa:118812"/>
<dbReference type="MANE-Select" id="ENST00000307450.11">
    <property type="protein sequence ID" value="ENSP00000307636.6"/>
    <property type="RefSeq nucleotide sequence ID" value="NM_178832.4"/>
    <property type="RefSeq protein sequence ID" value="NP_849154.1"/>
</dbReference>
<dbReference type="UCSC" id="uc001kob.5">
    <molecule id="Q8NDC4-1"/>
    <property type="organism name" value="human"/>
</dbReference>
<dbReference type="AGR" id="HGNC:24001"/>
<dbReference type="CTD" id="118812"/>
<dbReference type="DisGeNET" id="118812"/>
<dbReference type="GeneCards" id="MORN4"/>
<dbReference type="HGNC" id="HGNC:24001">
    <property type="gene designation" value="MORN4"/>
</dbReference>
<dbReference type="HPA" id="ENSG00000171160">
    <property type="expression patterns" value="Low tissue specificity"/>
</dbReference>
<dbReference type="MIM" id="617736">
    <property type="type" value="gene"/>
</dbReference>
<dbReference type="neXtProt" id="NX_Q8NDC4"/>
<dbReference type="OpenTargets" id="ENSG00000171160"/>
<dbReference type="PharmGKB" id="PA162396074"/>
<dbReference type="VEuPathDB" id="HostDB:ENSG00000171160"/>
<dbReference type="eggNOG" id="KOG0231">
    <property type="taxonomic scope" value="Eukaryota"/>
</dbReference>
<dbReference type="GeneTree" id="ENSGT00730000111173"/>
<dbReference type="HOGENOM" id="CLU_113346_0_0_1"/>
<dbReference type="InParanoid" id="Q8NDC4"/>
<dbReference type="OMA" id="FTRCDGM"/>
<dbReference type="OrthoDB" id="406044at2759"/>
<dbReference type="PAN-GO" id="Q8NDC4">
    <property type="GO annotations" value="2 GO annotations based on evolutionary models"/>
</dbReference>
<dbReference type="PhylomeDB" id="Q8NDC4"/>
<dbReference type="TreeFam" id="TF323893"/>
<dbReference type="PathwayCommons" id="Q8NDC4"/>
<dbReference type="SignaLink" id="Q8NDC4"/>
<dbReference type="BioGRID-ORCS" id="118812">
    <property type="hits" value="18 hits in 1155 CRISPR screens"/>
</dbReference>
<dbReference type="ChiTaRS" id="MORN4">
    <property type="organism name" value="human"/>
</dbReference>
<dbReference type="GenomeRNAi" id="118812"/>
<dbReference type="Pharos" id="Q8NDC4">
    <property type="development level" value="Tdark"/>
</dbReference>
<dbReference type="PRO" id="PR:Q8NDC4"/>
<dbReference type="Proteomes" id="UP000005640">
    <property type="component" value="Chromosome 10"/>
</dbReference>
<dbReference type="RNAct" id="Q8NDC4">
    <property type="molecule type" value="protein"/>
</dbReference>
<dbReference type="Bgee" id="ENSG00000171160">
    <property type="expression patterns" value="Expressed in cortical plate and 162 other cell types or tissues"/>
</dbReference>
<dbReference type="ExpressionAtlas" id="Q8NDC4">
    <property type="expression patterns" value="baseline and differential"/>
</dbReference>
<dbReference type="GO" id="GO:0042995">
    <property type="term" value="C:cell projection"/>
    <property type="evidence" value="ECO:0000318"/>
    <property type="project" value="GO_Central"/>
</dbReference>
<dbReference type="GO" id="GO:0005737">
    <property type="term" value="C:cytoplasm"/>
    <property type="evidence" value="ECO:0000314"/>
    <property type="project" value="UniProtKB"/>
</dbReference>
<dbReference type="GO" id="GO:0032433">
    <property type="term" value="C:filopodium tip"/>
    <property type="evidence" value="ECO:0000314"/>
    <property type="project" value="UniProtKB"/>
</dbReference>
<dbReference type="GO" id="GO:0032426">
    <property type="term" value="C:stereocilium tip"/>
    <property type="evidence" value="ECO:0000250"/>
    <property type="project" value="UniProtKB"/>
</dbReference>
<dbReference type="GO" id="GO:0048678">
    <property type="term" value="P:response to axon injury"/>
    <property type="evidence" value="ECO:0000250"/>
    <property type="project" value="UniProtKB"/>
</dbReference>
<dbReference type="FunFam" id="2.20.110.10:FF:000011">
    <property type="entry name" value="MORN repeat-containing protein 4"/>
    <property type="match status" value="1"/>
</dbReference>
<dbReference type="FunFam" id="2.20.110.10:FF:000014">
    <property type="entry name" value="MORN repeat-containing protein 4"/>
    <property type="match status" value="1"/>
</dbReference>
<dbReference type="Gene3D" id="2.20.110.10">
    <property type="entry name" value="Histone H3 K4-specific methyltransferase SET7/9 N-terminal domain"/>
    <property type="match status" value="2"/>
</dbReference>
<dbReference type="InterPro" id="IPR003409">
    <property type="entry name" value="MORN"/>
</dbReference>
<dbReference type="InterPro" id="IPR052315">
    <property type="entry name" value="MORN4"/>
</dbReference>
<dbReference type="PANTHER" id="PTHR46614">
    <property type="entry name" value="MORN REPEAT-CONTAINING PROTEIN 4"/>
    <property type="match status" value="1"/>
</dbReference>
<dbReference type="PANTHER" id="PTHR46614:SF1">
    <property type="entry name" value="MORN REPEAT-CONTAINING PROTEIN 4"/>
    <property type="match status" value="1"/>
</dbReference>
<dbReference type="Pfam" id="PF02493">
    <property type="entry name" value="MORN"/>
    <property type="match status" value="4"/>
</dbReference>
<dbReference type="SMART" id="SM00698">
    <property type="entry name" value="MORN"/>
    <property type="match status" value="4"/>
</dbReference>
<dbReference type="SUPFAM" id="SSF82185">
    <property type="entry name" value="Histone H3 K4-specific methyltransferase SET7/9 N-terminal domain"/>
    <property type="match status" value="1"/>
</dbReference>
<reference key="1">
    <citation type="submission" date="2001-04" db="EMBL/GenBank/DDBJ databases">
        <title>Homo sapiens gene 44050.</title>
        <authorList>
            <person name="Moschonas N.K."/>
        </authorList>
    </citation>
    <scope>NUCLEOTIDE SEQUENCE [MRNA] (ISOFORMS 1 AND 2)</scope>
</reference>
<reference key="2">
    <citation type="journal article" date="2007" name="Mol. Genet. Genomics">
        <title>Drosophila retinophilin contains MORN repeats and is conserved in humans.</title>
        <authorList>
            <person name="Mecklenburg K.L."/>
        </authorList>
    </citation>
    <scope>NUCLEOTIDE SEQUENCE [MRNA]</scope>
</reference>
<reference key="3">
    <citation type="journal article" date="2007" name="BMC Genomics">
        <title>The full-ORF clone resource of the German cDNA consortium.</title>
        <authorList>
            <person name="Bechtel S."/>
            <person name="Rosenfelder H."/>
            <person name="Duda A."/>
            <person name="Schmidt C.P."/>
            <person name="Ernst U."/>
            <person name="Wellenreuther R."/>
            <person name="Mehrle A."/>
            <person name="Schuster C."/>
            <person name="Bahr A."/>
            <person name="Bloecker H."/>
            <person name="Heubner D."/>
            <person name="Hoerlein A."/>
            <person name="Michel G."/>
            <person name="Wedler H."/>
            <person name="Koehrer K."/>
            <person name="Ottenwaelder B."/>
            <person name="Poustka A."/>
            <person name="Wiemann S."/>
            <person name="Schupp I."/>
        </authorList>
    </citation>
    <scope>NUCLEOTIDE SEQUENCE [LARGE SCALE MRNA] (ISOFORM 1)</scope>
    <source>
        <tissue>Fetal brain</tissue>
    </source>
</reference>
<reference key="4">
    <citation type="journal article" date="2004" name="Nature">
        <title>The DNA sequence and comparative analysis of human chromosome 10.</title>
        <authorList>
            <person name="Deloukas P."/>
            <person name="Earthrowl M.E."/>
            <person name="Grafham D.V."/>
            <person name="Rubenfield M."/>
            <person name="French L."/>
            <person name="Steward C.A."/>
            <person name="Sims S.K."/>
            <person name="Jones M.C."/>
            <person name="Searle S."/>
            <person name="Scott C."/>
            <person name="Howe K."/>
            <person name="Hunt S.E."/>
            <person name="Andrews T.D."/>
            <person name="Gilbert J.G.R."/>
            <person name="Swarbreck D."/>
            <person name="Ashurst J.L."/>
            <person name="Taylor A."/>
            <person name="Battles J."/>
            <person name="Bird C.P."/>
            <person name="Ainscough R."/>
            <person name="Almeida J.P."/>
            <person name="Ashwell R.I.S."/>
            <person name="Ambrose K.D."/>
            <person name="Babbage A.K."/>
            <person name="Bagguley C.L."/>
            <person name="Bailey J."/>
            <person name="Banerjee R."/>
            <person name="Bates K."/>
            <person name="Beasley H."/>
            <person name="Bray-Allen S."/>
            <person name="Brown A.J."/>
            <person name="Brown J.Y."/>
            <person name="Burford D.C."/>
            <person name="Burrill W."/>
            <person name="Burton J."/>
            <person name="Cahill P."/>
            <person name="Camire D."/>
            <person name="Carter N.P."/>
            <person name="Chapman J.C."/>
            <person name="Clark S.Y."/>
            <person name="Clarke G."/>
            <person name="Clee C.M."/>
            <person name="Clegg S."/>
            <person name="Corby N."/>
            <person name="Coulson A."/>
            <person name="Dhami P."/>
            <person name="Dutta I."/>
            <person name="Dunn M."/>
            <person name="Faulkner L."/>
            <person name="Frankish A."/>
            <person name="Frankland J.A."/>
            <person name="Garner P."/>
            <person name="Garnett J."/>
            <person name="Gribble S."/>
            <person name="Griffiths C."/>
            <person name="Grocock R."/>
            <person name="Gustafson E."/>
            <person name="Hammond S."/>
            <person name="Harley J.L."/>
            <person name="Hart E."/>
            <person name="Heath P.D."/>
            <person name="Ho T.P."/>
            <person name="Hopkins B."/>
            <person name="Horne J."/>
            <person name="Howden P.J."/>
            <person name="Huckle E."/>
            <person name="Hynds C."/>
            <person name="Johnson C."/>
            <person name="Johnson D."/>
            <person name="Kana A."/>
            <person name="Kay M."/>
            <person name="Kimberley A.M."/>
            <person name="Kershaw J.K."/>
            <person name="Kokkinaki M."/>
            <person name="Laird G.K."/>
            <person name="Lawlor S."/>
            <person name="Lee H.M."/>
            <person name="Leongamornlert D.A."/>
            <person name="Laird G."/>
            <person name="Lloyd C."/>
            <person name="Lloyd D.M."/>
            <person name="Loveland J."/>
            <person name="Lovell J."/>
            <person name="McLaren S."/>
            <person name="McLay K.E."/>
            <person name="McMurray A."/>
            <person name="Mashreghi-Mohammadi M."/>
            <person name="Matthews L."/>
            <person name="Milne S."/>
            <person name="Nickerson T."/>
            <person name="Nguyen M."/>
            <person name="Overton-Larty E."/>
            <person name="Palmer S.A."/>
            <person name="Pearce A.V."/>
            <person name="Peck A.I."/>
            <person name="Pelan S."/>
            <person name="Phillimore B."/>
            <person name="Porter K."/>
            <person name="Rice C.M."/>
            <person name="Rogosin A."/>
            <person name="Ross M.T."/>
            <person name="Sarafidou T."/>
            <person name="Sehra H.K."/>
            <person name="Shownkeen R."/>
            <person name="Skuce C.D."/>
            <person name="Smith M."/>
            <person name="Standring L."/>
            <person name="Sycamore N."/>
            <person name="Tester J."/>
            <person name="Thorpe A."/>
            <person name="Torcasso W."/>
            <person name="Tracey A."/>
            <person name="Tromans A."/>
            <person name="Tsolas J."/>
            <person name="Wall M."/>
            <person name="Walsh J."/>
            <person name="Wang H."/>
            <person name="Weinstock K."/>
            <person name="West A.P."/>
            <person name="Willey D.L."/>
            <person name="Whitehead S.L."/>
            <person name="Wilming L."/>
            <person name="Wray P.W."/>
            <person name="Young L."/>
            <person name="Chen Y."/>
            <person name="Lovering R.C."/>
            <person name="Moschonas N.K."/>
            <person name="Siebert R."/>
            <person name="Fechtel K."/>
            <person name="Bentley D."/>
            <person name="Durbin R.M."/>
            <person name="Hubbard T."/>
            <person name="Doucette-Stamm L."/>
            <person name="Beck S."/>
            <person name="Smith D.R."/>
            <person name="Rogers J."/>
        </authorList>
    </citation>
    <scope>NUCLEOTIDE SEQUENCE [LARGE SCALE GENOMIC DNA]</scope>
</reference>
<reference key="5">
    <citation type="journal article" date="2004" name="Genome Res.">
        <title>The status, quality, and expansion of the NIH full-length cDNA project: the Mammalian Gene Collection (MGC).</title>
        <authorList>
            <consortium name="The MGC Project Team"/>
        </authorList>
    </citation>
    <scope>NUCLEOTIDE SEQUENCE [LARGE SCALE MRNA] (ISOFORM 1)</scope>
    <source>
        <tissue>Placenta</tissue>
    </source>
</reference>
<reference key="6">
    <citation type="journal article" date="2015" name="PLoS ONE">
        <title>Invertebrate and vertebrate class III myosins interact with MORN repeat-containing adaptor proteins.</title>
        <authorList>
            <person name="Mecklenburg K.L."/>
            <person name="Freed S.A."/>
            <person name="Raval M."/>
            <person name="Quintero O.A."/>
            <person name="Yengo C.M."/>
            <person name="O'Tousa J.E."/>
        </authorList>
    </citation>
    <scope>INTERACTION WITH MYO3A</scope>
    <scope>SUBCELLULAR LOCATION</scope>
</reference>
<evidence type="ECO:0000250" key="1">
    <source>
        <dbReference type="UniProtKB" id="Q6PGF2"/>
    </source>
</evidence>
<evidence type="ECO:0000269" key="2">
    <source>
    </source>
</evidence>
<evidence type="ECO:0000303" key="3">
    <source>
    </source>
</evidence>
<evidence type="ECO:0000303" key="4">
    <source ref="1"/>
</evidence>
<protein>
    <recommendedName>
        <fullName>MORN repeat-containing protein 4</fullName>
    </recommendedName>
    <alternativeName>
        <fullName>Protein 44050</fullName>
    </alternativeName>
    <alternativeName>
        <fullName evidence="3">Retinophilin</fullName>
    </alternativeName>
</protein>
<keyword id="KW-0025">Alternative splicing</keyword>
<keyword id="KW-0966">Cell projection</keyword>
<keyword id="KW-0963">Cytoplasm</keyword>
<keyword id="KW-1267">Proteomics identification</keyword>
<keyword id="KW-1185">Reference proteome</keyword>
<keyword id="KW-0677">Repeat</keyword>
<comment type="function">
    <text evidence="1">Plays a role in promoting axonal degeneration following neuronal injury by toxic insult or trauma.</text>
</comment>
<comment type="subunit">
    <text evidence="2">Interacts with MYO3A.</text>
</comment>
<comment type="interaction">
    <interactant intactId="EBI-10269566">
        <id>Q8NDC4</id>
    </interactant>
    <interactant intactId="EBI-3936819">
        <id>Q6Q788</id>
        <label>APOA5</label>
    </interactant>
    <organismsDiffer>false</organismsDiffer>
    <experiments>3</experiments>
</comment>
<comment type="interaction">
    <interactant intactId="EBI-10269566">
        <id>Q8NDC4</id>
    </interactant>
    <interactant intactId="EBI-1211496">
        <id>Q5T5X7</id>
        <label>BEND3</label>
    </interactant>
    <organismsDiffer>false</organismsDiffer>
    <experiments>6</experiments>
</comment>
<comment type="interaction">
    <interactant intactId="EBI-10269566">
        <id>Q8NDC4</id>
    </interactant>
    <interactant intactId="EBI-10205543">
        <id>Q9NQ79</id>
        <label>CRTAC1</label>
    </interactant>
    <organismsDiffer>false</organismsDiffer>
    <experiments>3</experiments>
</comment>
<comment type="interaction">
    <interactant intactId="EBI-10269566">
        <id>Q8NDC4</id>
    </interactant>
    <interactant intactId="EBI-2349100">
        <id>Q8WXX5</id>
        <label>DNAJC9</label>
    </interactant>
    <organismsDiffer>false</organismsDiffer>
    <experiments>3</experiments>
</comment>
<comment type="interaction">
    <interactant intactId="EBI-10269566">
        <id>Q8NDC4</id>
    </interactant>
    <interactant intactId="EBI-371922">
        <id>Q96B26</id>
        <label>EXOSC8</label>
    </interactant>
    <organismsDiffer>false</organismsDiffer>
    <experiments>3</experiments>
</comment>
<comment type="interaction">
    <interactant intactId="EBI-10269566">
        <id>Q8NDC4</id>
    </interactant>
    <interactant intactId="EBI-10220102">
        <id>B7ZLH0</id>
        <label>FAM22F</label>
    </interactant>
    <organismsDiffer>false</organismsDiffer>
    <experiments>6</experiments>
</comment>
<comment type="interaction">
    <interactant intactId="EBI-10269566">
        <id>Q8NDC4</id>
    </interactant>
    <interactant intactId="EBI-11978177">
        <id>Q96NT3-2</id>
        <label>GUCD1</label>
    </interactant>
    <organismsDiffer>false</organismsDiffer>
    <experiments>3</experiments>
</comment>
<comment type="interaction">
    <interactant intactId="EBI-10269566">
        <id>Q8NDC4</id>
    </interactant>
    <interactant intactId="EBI-2556203">
        <id>O75330</id>
        <label>HMMR</label>
    </interactant>
    <organismsDiffer>false</organismsDiffer>
    <experiments>4</experiments>
</comment>
<comment type="interaction">
    <interactant intactId="EBI-10269566">
        <id>Q8NDC4</id>
    </interactant>
    <interactant intactId="EBI-12098658">
        <id>O75330-3</id>
        <label>HMMR</label>
    </interactant>
    <organismsDiffer>false</organismsDiffer>
    <experiments>3</experiments>
</comment>
<comment type="interaction">
    <interactant intactId="EBI-10269566">
        <id>Q8NDC4</id>
    </interactant>
    <interactant intactId="EBI-769401">
        <id>Q8NBZ0</id>
        <label>INO80E</label>
    </interactant>
    <organismsDiffer>false</organismsDiffer>
    <experiments>3</experiments>
</comment>
<comment type="interaction">
    <interactant intactId="EBI-10269566">
        <id>Q8NDC4</id>
    </interactant>
    <interactant intactId="EBI-11980019">
        <id>Q7Z3Z0</id>
        <label>KRT25</label>
    </interactant>
    <organismsDiffer>false</organismsDiffer>
    <experiments>3</experiments>
</comment>
<comment type="interaction">
    <interactant intactId="EBI-10269566">
        <id>Q8NDC4</id>
    </interactant>
    <interactant intactId="EBI-3044087">
        <id>Q7Z3Y8</id>
        <label>KRT27</label>
    </interactant>
    <organismsDiffer>false</organismsDiffer>
    <experiments>3</experiments>
</comment>
<comment type="interaction">
    <interactant intactId="EBI-10269566">
        <id>Q8NDC4</id>
    </interactant>
    <interactant intactId="EBI-12081182">
        <id>Q86UL8-2</id>
        <label>MAGI2</label>
    </interactant>
    <organismsDiffer>false</organismsDiffer>
    <experiments>3</experiments>
</comment>
<comment type="interaction">
    <interactant intactId="EBI-10269566">
        <id>Q8NDC4</id>
    </interactant>
    <interactant intactId="EBI-10178410">
        <id>Q86Y26</id>
        <label>NUTM1</label>
    </interactant>
    <organismsDiffer>false</organismsDiffer>
    <experiments>3</experiments>
</comment>
<comment type="interaction">
    <interactant intactId="EBI-10269566">
        <id>Q8NDC4</id>
    </interactant>
    <interactant intactId="EBI-10269689">
        <id>Q9P242</id>
        <label>NYAP2</label>
    </interactant>
    <organismsDiffer>false</organismsDiffer>
    <experiments>4</experiments>
</comment>
<comment type="interaction">
    <interactant intactId="EBI-10269566">
        <id>Q8NDC4</id>
    </interactant>
    <interactant intactId="EBI-2876622">
        <id>Q9UPG8</id>
        <label>PLAGL2</label>
    </interactant>
    <organismsDiffer>false</organismsDiffer>
    <experiments>3</experiments>
</comment>
<comment type="interaction">
    <interactant intactId="EBI-10269566">
        <id>Q8NDC4</id>
    </interactant>
    <interactant intactId="EBI-689202">
        <id>P17081</id>
        <label>RHOQ</label>
    </interactant>
    <organismsDiffer>false</organismsDiffer>
    <experiments>3</experiments>
</comment>
<comment type="interaction">
    <interactant intactId="EBI-10269566">
        <id>Q8NDC4</id>
    </interactant>
    <interactant intactId="EBI-957999">
        <id>Q9NVA2</id>
        <label>SEPTIN11</label>
    </interactant>
    <organismsDiffer>false</organismsDiffer>
    <experiments>3</experiments>
</comment>
<comment type="interaction">
    <interactant intactId="EBI-10269566">
        <id>Q8NDC4</id>
    </interactant>
    <interactant intactId="EBI-745901">
        <id>Q14141</id>
        <label>SEPTIN6</label>
    </interactant>
    <organismsDiffer>false</organismsDiffer>
    <experiments>6</experiments>
</comment>
<comment type="interaction">
    <interactant intactId="EBI-10269566">
        <id>Q8NDC4</id>
    </interactant>
    <interactant intactId="EBI-727106">
        <id>Q16143</id>
        <label>SNCB</label>
    </interactant>
    <organismsDiffer>false</organismsDiffer>
    <experiments>6</experiments>
</comment>
<comment type="interaction">
    <interactant intactId="EBI-10269566">
        <id>Q8NDC4</id>
    </interactant>
    <interactant intactId="EBI-2212028">
        <id>Q9Y2D8</id>
        <label>SSX2IP</label>
    </interactant>
    <organismsDiffer>false</organismsDiffer>
    <experiments>6</experiments>
</comment>
<comment type="interaction">
    <interactant intactId="EBI-10269566">
        <id>Q8NDC4</id>
    </interactant>
    <interactant intactId="EBI-14291493">
        <id>Q9HCH5-13</id>
        <label>SYTL2</label>
    </interactant>
    <organismsDiffer>false</organismsDiffer>
    <experiments>3</experiments>
</comment>
<comment type="interaction">
    <interactant intactId="EBI-10269566">
        <id>Q8NDC4</id>
    </interactant>
    <interactant intactId="EBI-722877">
        <id>Q99081</id>
        <label>TCF12</label>
    </interactant>
    <organismsDiffer>false</organismsDiffer>
    <experiments>3</experiments>
</comment>
<comment type="interaction">
    <interactant intactId="EBI-10269566">
        <id>Q8NDC4</id>
    </interactant>
    <interactant intactId="EBI-11952764">
        <id>Q99081-3</id>
        <label>TCF12</label>
    </interactant>
    <organismsDiffer>false</organismsDiffer>
    <experiments>3</experiments>
</comment>
<comment type="interaction">
    <interactant intactId="EBI-10269566">
        <id>Q8NDC4</id>
    </interactant>
    <interactant intactId="EBI-533224">
        <id>P15884</id>
        <label>TCF4</label>
    </interactant>
    <organismsDiffer>false</organismsDiffer>
    <experiments>3</experiments>
</comment>
<comment type="interaction">
    <interactant intactId="EBI-10269566">
        <id>Q8NDC4</id>
    </interactant>
    <interactant intactId="EBI-13636688">
        <id>P15884-3</id>
        <label>TCF4</label>
    </interactant>
    <organismsDiffer>false</organismsDiffer>
    <experiments>3</experiments>
</comment>
<comment type="interaction">
    <interactant intactId="EBI-10269566">
        <id>Q8NDC4</id>
    </interactant>
    <interactant intactId="EBI-740098">
        <id>P36406</id>
        <label>TRIM23</label>
    </interactant>
    <organismsDiffer>false</organismsDiffer>
    <experiments>6</experiments>
</comment>
<comment type="interaction">
    <interactant intactId="EBI-10269566">
        <id>Q8NDC4</id>
    </interactant>
    <interactant intactId="EBI-8787399">
        <id>Q96DX7</id>
        <label>TRIM44</label>
    </interactant>
    <organismsDiffer>false</organismsDiffer>
    <experiments>3</experiments>
</comment>
<comment type="interaction">
    <interactant intactId="EBI-10269566">
        <id>Q8NDC4</id>
    </interactant>
    <interactant intactId="EBI-2339926">
        <id>Q8IX04</id>
        <label>UEVLD</label>
    </interactant>
    <organismsDiffer>false</organismsDiffer>
    <experiments>2</experiments>
</comment>
<comment type="interaction">
    <interactant intactId="EBI-10269566">
        <id>Q8NDC4</id>
    </interactant>
    <interactant intactId="EBI-714455">
        <id>Q9Y2W2</id>
        <label>WBP11</label>
    </interactant>
    <organismsDiffer>false</organismsDiffer>
    <experiments>3</experiments>
</comment>
<comment type="interaction">
    <interactant intactId="EBI-10269566">
        <id>Q8NDC4</id>
    </interactant>
    <interactant intactId="EBI-10213055">
        <id>P52739-2</id>
        <label>ZNF131</label>
    </interactant>
    <organismsDiffer>false</organismsDiffer>
    <experiments>3</experiments>
</comment>
<comment type="interaction">
    <interactant intactId="EBI-10269566">
        <id>Q8NDC4</id>
    </interactant>
    <interactant intactId="EBI-10211777">
        <id>A0A384ME25</id>
    </interactant>
    <organismsDiffer>false</organismsDiffer>
    <experiments>8</experiments>
</comment>
<comment type="subcellular location">
    <subcellularLocation>
        <location evidence="2">Cytoplasm</location>
    </subcellularLocation>
    <subcellularLocation>
        <location evidence="2">Cell projection</location>
        <location evidence="2">Filopodium tip</location>
    </subcellularLocation>
    <subcellularLocation>
        <location evidence="1">Cell projection</location>
        <location evidence="1">Stereocilium</location>
    </subcellularLocation>
    <text evidence="2">Found in the cytoplasm in the absence of MYO3A and localizes at filopodial tips in the presence of MYO3A.</text>
</comment>
<comment type="alternative products">
    <event type="alternative splicing"/>
    <isoform>
        <id>Q8NDC4-1</id>
        <name>1</name>
        <sequence type="displayed"/>
    </isoform>
    <isoform>
        <id>Q8NDC4-2</id>
        <name>2</name>
        <sequence type="described" ref="VSP_023457"/>
    </isoform>
</comment>
<name>MORN4_HUMAN</name>
<organism>
    <name type="scientific">Homo sapiens</name>
    <name type="common">Human</name>
    <dbReference type="NCBI Taxonomy" id="9606"/>
    <lineage>
        <taxon>Eukaryota</taxon>
        <taxon>Metazoa</taxon>
        <taxon>Chordata</taxon>
        <taxon>Craniata</taxon>
        <taxon>Vertebrata</taxon>
        <taxon>Euteleostomi</taxon>
        <taxon>Mammalia</taxon>
        <taxon>Eutheria</taxon>
        <taxon>Euarchontoglires</taxon>
        <taxon>Primates</taxon>
        <taxon>Haplorrhini</taxon>
        <taxon>Catarrhini</taxon>
        <taxon>Hominidae</taxon>
        <taxon>Homo</taxon>
    </lineage>
</organism>
<proteinExistence type="evidence at protein level"/>
<sequence length="146" mass="16236">MTLTKGSFTYSSGEEYRGEWKEGRRHGFGQLMFADGGTYLGHFENGLFNGFGVLTFSDGSRYEGEFAQGKFNGVGVFIRYDNMTFEGEFKNGRVDGFGLLTFPDGSHGIPRNEGLFENNKLLRREKCSAIVQRAQSASKSARNLTA</sequence>